<accession>Q918W0</accession>
<organismHost>
    <name type="scientific">Citrus</name>
    <dbReference type="NCBI Taxonomy" id="2706"/>
</organismHost>
<dbReference type="EMBL" id="AF406744">
    <property type="protein sequence ID" value="AAK97525.1"/>
    <property type="molecule type" value="Genomic_RNA"/>
</dbReference>
<dbReference type="RefSeq" id="NP_203556.1">
    <property type="nucleotide sequence ID" value="NC_003093.1"/>
</dbReference>
<dbReference type="KEGG" id="vg:922106"/>
<dbReference type="Proteomes" id="UP000000394">
    <property type="component" value="Segment"/>
</dbReference>
<dbReference type="GO" id="GO:0044167">
    <property type="term" value="C:host cell endoplasmic reticulum membrane"/>
    <property type="evidence" value="ECO:0007669"/>
    <property type="project" value="UniProtKB-SubCell"/>
</dbReference>
<dbReference type="GO" id="GO:0016020">
    <property type="term" value="C:membrane"/>
    <property type="evidence" value="ECO:0007669"/>
    <property type="project" value="UniProtKB-KW"/>
</dbReference>
<dbReference type="GO" id="GO:0046740">
    <property type="term" value="P:transport of virus in host, cell to cell"/>
    <property type="evidence" value="ECO:0007669"/>
    <property type="project" value="UniProtKB-KW"/>
</dbReference>
<dbReference type="InterPro" id="IPR003411">
    <property type="entry name" value="TGBp3"/>
</dbReference>
<dbReference type="Pfam" id="PF02495">
    <property type="entry name" value="TGBp3"/>
    <property type="match status" value="1"/>
</dbReference>
<organism>
    <name type="scientific">Indian citrus ringspot virus (isolate Kinnow mandarin/India/K1/1996)</name>
    <name type="common">ICRSV</name>
    <dbReference type="NCBI Taxonomy" id="651357"/>
    <lineage>
        <taxon>Viruses</taxon>
        <taxon>Riboviria</taxon>
        <taxon>Orthornavirae</taxon>
        <taxon>Kitrinoviricota</taxon>
        <taxon>Alsuviricetes</taxon>
        <taxon>Tymovirales</taxon>
        <taxon>Alphaflexiviridae</taxon>
        <taxon>Potexvirus</taxon>
        <taxon>Mandarivirus</taxon>
        <taxon>Indian citrus ringspot virus</taxon>
    </lineage>
</organism>
<name>TGB3_ICRSV</name>
<evidence type="ECO:0000250" key="1"/>
<evidence type="ECO:0000255" key="2"/>
<evidence type="ECO:0000305" key="3"/>
<protein>
    <recommendedName>
        <fullName>Movement protein TGBp3</fullName>
    </recommendedName>
    <alternativeName>
        <fullName>Triple gene block 3 protein</fullName>
        <shortName>TGBp3</shortName>
    </alternativeName>
</protein>
<keyword id="KW-1038">Host endoplasmic reticulum</keyword>
<keyword id="KW-1043">Host membrane</keyword>
<keyword id="KW-0472">Membrane</keyword>
<keyword id="KW-1185">Reference proteome</keyword>
<keyword id="KW-0812">Transmembrane</keyword>
<keyword id="KW-1133">Transmembrane helix</keyword>
<keyword id="KW-0813">Transport</keyword>
<keyword id="KW-0916">Viral movement protein</keyword>
<proteinExistence type="inferred from homology"/>
<feature type="chain" id="PRO_0000401081" description="Movement protein TGBp3">
    <location>
        <begin position="1"/>
        <end position="60"/>
    </location>
</feature>
<feature type="topological domain" description="Lumenal" evidence="2">
    <location>
        <begin position="1"/>
        <end position="6"/>
    </location>
</feature>
<feature type="transmembrane region" description="Helical" evidence="2">
    <location>
        <begin position="7"/>
        <end position="23"/>
    </location>
</feature>
<feature type="topological domain" description="Cytoplasmic" evidence="2">
    <location>
        <begin position="24"/>
        <end position="60"/>
    </location>
</feature>
<sequence length="60" mass="6389">MHYIDWVILLTFAAALIVCLTPKPEPCIITVSGASATVSNCPNPELLTDLVKALKPAKPV</sequence>
<comment type="function">
    <text evidence="1">Plays a role in viral cell-to-cell propagation, by facilitating genome transport to neighboring plant cells through plasmosdesmata. May induce the formation of granular vesicles derived from the Endoplasmic reticulum, which align on actin filaments (By similarity).</text>
</comment>
<comment type="subcellular location">
    <subcellularLocation>
        <location evidence="1">Host endoplasmic reticulum membrane</location>
    </subcellularLocation>
</comment>
<comment type="miscellaneous">
    <text>TGBp1, TGBp2 and TGBp3 seem to act together for cell-to-cell propagation. TGBp1 is the main movement protein that physically cross the plasmodesma with the viral genome. TGBp2 and TGBp3 would facilitate TGBp1 function.</text>
</comment>
<comment type="similarity">
    <text evidence="3">Belongs to the Tymovirales TGBp3 protein family.</text>
</comment>
<gene>
    <name type="ORF">ORF4</name>
</gene>
<reference key="1">
    <citation type="journal article" date="2000" name="Arch. Virol.">
        <title>Indian citrus ringspot virus: a proposed new species with some affinities to potex-, carla-, fovea- and allexiviruses.</title>
        <authorList>
            <person name="Rustici G."/>
            <person name="Accotto G.P."/>
            <person name="Noris E."/>
            <person name="Masenga V."/>
            <person name="Luisoni E."/>
            <person name="Milne R.G."/>
        </authorList>
    </citation>
    <scope>NUCLEOTIDE SEQUENCE [GENOMIC RNA]</scope>
</reference>
<reference key="2">
    <citation type="journal article" date="2002" name="Arch. Virol.">
        <title>Nucleotide sequence, genome organisation and phylogenetic analysis of Indian citrus ringspot virus.</title>
        <authorList>
            <person name="Rustici G."/>
            <person name="Milne R.G."/>
            <person name="Accotto G.P."/>
        </authorList>
    </citation>
    <scope>NUCLEOTIDE SEQUENCE [GENOMIC RNA]</scope>
</reference>